<sequence length="138" mass="15696">MHEWALADGIVRTAIEFARQHGKEKVLAMRISLGELQDVNQEILEFAINEIKKGTIAEEAELEFIIEEAEFKCRNCGNEWKLKDVKESFNETIKEDIHFIPEVVHAFLACPNCGSRDFEVTKGRGVYLAAIKVEGDDE</sequence>
<comment type="function">
    <text evidence="1">Involved in the maturation of [NiFe] hydrogenases. Required for nickel insertion into the metal center of the hydrogenase.</text>
</comment>
<comment type="similarity">
    <text evidence="1">Belongs to the HypA/HybF family.</text>
</comment>
<feature type="chain" id="PRO_1000204209" description="Hydrogenase maturation factor HypA">
    <location>
        <begin position="1"/>
        <end position="138"/>
    </location>
</feature>
<feature type="binding site" evidence="1">
    <location>
        <position position="2"/>
    </location>
    <ligand>
        <name>Ni(2+)</name>
        <dbReference type="ChEBI" id="CHEBI:49786"/>
    </ligand>
</feature>
<feature type="binding site" evidence="1">
    <location>
        <position position="73"/>
    </location>
    <ligand>
        <name>Zn(2+)</name>
        <dbReference type="ChEBI" id="CHEBI:29105"/>
    </ligand>
</feature>
<feature type="binding site" evidence="1">
    <location>
        <position position="76"/>
    </location>
    <ligand>
        <name>Zn(2+)</name>
        <dbReference type="ChEBI" id="CHEBI:29105"/>
    </ligand>
</feature>
<feature type="binding site" evidence="1">
    <location>
        <position position="110"/>
    </location>
    <ligand>
        <name>Zn(2+)</name>
        <dbReference type="ChEBI" id="CHEBI:29105"/>
    </ligand>
</feature>
<feature type="binding site" evidence="1">
    <location>
        <position position="113"/>
    </location>
    <ligand>
        <name>Zn(2+)</name>
        <dbReference type="ChEBI" id="CHEBI:29105"/>
    </ligand>
</feature>
<dbReference type="EMBL" id="CP001463">
    <property type="protein sequence ID" value="ACS90061.1"/>
    <property type="molecule type" value="Genomic_DNA"/>
</dbReference>
<dbReference type="RefSeq" id="WP_015849280.1">
    <property type="nucleotide sequence ID" value="NC_012883.1"/>
</dbReference>
<dbReference type="SMR" id="C6A366"/>
<dbReference type="STRING" id="604354.TSIB_1004"/>
<dbReference type="GeneID" id="8096000"/>
<dbReference type="KEGG" id="tsi:TSIB_1004"/>
<dbReference type="eggNOG" id="arCOG04426">
    <property type="taxonomic scope" value="Archaea"/>
</dbReference>
<dbReference type="HOGENOM" id="CLU_126929_2_0_2"/>
<dbReference type="OrthoDB" id="36835at2157"/>
<dbReference type="Proteomes" id="UP000009079">
    <property type="component" value="Chromosome"/>
</dbReference>
<dbReference type="GO" id="GO:0016151">
    <property type="term" value="F:nickel cation binding"/>
    <property type="evidence" value="ECO:0007669"/>
    <property type="project" value="UniProtKB-UniRule"/>
</dbReference>
<dbReference type="GO" id="GO:0008270">
    <property type="term" value="F:zinc ion binding"/>
    <property type="evidence" value="ECO:0007669"/>
    <property type="project" value="UniProtKB-UniRule"/>
</dbReference>
<dbReference type="GO" id="GO:0051604">
    <property type="term" value="P:protein maturation"/>
    <property type="evidence" value="ECO:0007669"/>
    <property type="project" value="InterPro"/>
</dbReference>
<dbReference type="GO" id="GO:0036211">
    <property type="term" value="P:protein modification process"/>
    <property type="evidence" value="ECO:0007669"/>
    <property type="project" value="UniProtKB-UniRule"/>
</dbReference>
<dbReference type="Gene3D" id="3.30.2320.80">
    <property type="match status" value="1"/>
</dbReference>
<dbReference type="HAMAP" id="MF_00213">
    <property type="entry name" value="HypA_HybF"/>
    <property type="match status" value="1"/>
</dbReference>
<dbReference type="InterPro" id="IPR000688">
    <property type="entry name" value="HypA/HybF"/>
</dbReference>
<dbReference type="NCBIfam" id="NF003008">
    <property type="entry name" value="PRK03824.1"/>
    <property type="match status" value="1"/>
</dbReference>
<dbReference type="PANTHER" id="PTHR34535">
    <property type="entry name" value="HYDROGENASE MATURATION FACTOR HYPA"/>
    <property type="match status" value="1"/>
</dbReference>
<dbReference type="PANTHER" id="PTHR34535:SF3">
    <property type="entry name" value="HYDROGENASE MATURATION FACTOR HYPA"/>
    <property type="match status" value="1"/>
</dbReference>
<dbReference type="Pfam" id="PF01155">
    <property type="entry name" value="HypA"/>
    <property type="match status" value="1"/>
</dbReference>
<dbReference type="PIRSF" id="PIRSF004761">
    <property type="entry name" value="Hydrgn_mat_HypA"/>
    <property type="match status" value="1"/>
</dbReference>
<accession>C6A366</accession>
<name>HYPA_THESM</name>
<gene>
    <name evidence="1" type="primary">hypA</name>
    <name type="ordered locus">TSIB_1004</name>
</gene>
<keyword id="KW-0479">Metal-binding</keyword>
<keyword id="KW-0533">Nickel</keyword>
<keyword id="KW-1185">Reference proteome</keyword>
<keyword id="KW-0862">Zinc</keyword>
<organism>
    <name type="scientific">Thermococcus sibiricus (strain DSM 12597 / MM 739)</name>
    <dbReference type="NCBI Taxonomy" id="604354"/>
    <lineage>
        <taxon>Archaea</taxon>
        <taxon>Methanobacteriati</taxon>
        <taxon>Methanobacteriota</taxon>
        <taxon>Thermococci</taxon>
        <taxon>Thermococcales</taxon>
        <taxon>Thermococcaceae</taxon>
        <taxon>Thermococcus</taxon>
    </lineage>
</organism>
<evidence type="ECO:0000255" key="1">
    <source>
        <dbReference type="HAMAP-Rule" id="MF_00213"/>
    </source>
</evidence>
<reference key="1">
    <citation type="journal article" date="2009" name="Appl. Environ. Microbiol.">
        <title>Metabolic versatility and indigenous origin of the archaeon Thermococcus sibiricus, isolated from a siberian oil reservoir, as revealed by genome analysis.</title>
        <authorList>
            <person name="Mardanov A.V."/>
            <person name="Ravin N.V."/>
            <person name="Svetlitchnyi V.A."/>
            <person name="Beletsky A.V."/>
            <person name="Miroshnichenko M.L."/>
            <person name="Bonch-Osmolovskaya E.A."/>
            <person name="Skryabin K.G."/>
        </authorList>
    </citation>
    <scope>NUCLEOTIDE SEQUENCE [LARGE SCALE GENOMIC DNA]</scope>
    <source>
        <strain>DSM 12597 / MM 739</strain>
    </source>
</reference>
<proteinExistence type="inferred from homology"/>
<protein>
    <recommendedName>
        <fullName evidence="1">Hydrogenase maturation factor HypA</fullName>
    </recommendedName>
</protein>